<reference key="1">
    <citation type="submission" date="2006-03" db="EMBL/GenBank/DDBJ databases">
        <title>Complete sequence of Rhodopseudomonas palustris BisB5.</title>
        <authorList>
            <consortium name="US DOE Joint Genome Institute"/>
            <person name="Copeland A."/>
            <person name="Lucas S."/>
            <person name="Lapidus A."/>
            <person name="Barry K."/>
            <person name="Detter J.C."/>
            <person name="Glavina del Rio T."/>
            <person name="Hammon N."/>
            <person name="Israni S."/>
            <person name="Dalin E."/>
            <person name="Tice H."/>
            <person name="Pitluck S."/>
            <person name="Chain P."/>
            <person name="Malfatti S."/>
            <person name="Shin M."/>
            <person name="Vergez L."/>
            <person name="Schmutz J."/>
            <person name="Larimer F."/>
            <person name="Land M."/>
            <person name="Hauser L."/>
            <person name="Pelletier D.A."/>
            <person name="Kyrpides N."/>
            <person name="Lykidis A."/>
            <person name="Oda Y."/>
            <person name="Harwood C.S."/>
            <person name="Richardson P."/>
        </authorList>
    </citation>
    <scope>NUCLEOTIDE SEQUENCE [LARGE SCALE GENOMIC DNA]</scope>
    <source>
        <strain>BisB5</strain>
    </source>
</reference>
<evidence type="ECO:0000255" key="1">
    <source>
        <dbReference type="HAMAP-Rule" id="MF_00489"/>
    </source>
</evidence>
<protein>
    <recommendedName>
        <fullName evidence="1">UPF0178 protein RPD_2254</fullName>
    </recommendedName>
</protein>
<accession>Q138K0</accession>
<organism>
    <name type="scientific">Rhodopseudomonas palustris (strain BisB5)</name>
    <dbReference type="NCBI Taxonomy" id="316057"/>
    <lineage>
        <taxon>Bacteria</taxon>
        <taxon>Pseudomonadati</taxon>
        <taxon>Pseudomonadota</taxon>
        <taxon>Alphaproteobacteria</taxon>
        <taxon>Hyphomicrobiales</taxon>
        <taxon>Nitrobacteraceae</taxon>
        <taxon>Rhodopseudomonas</taxon>
    </lineage>
</organism>
<name>Y2254_RHOPS</name>
<feature type="chain" id="PRO_1000014437" description="UPF0178 protein RPD_2254">
    <location>
        <begin position="1"/>
        <end position="164"/>
    </location>
</feature>
<sequence>MTEPAPTRIYVDADACPVKDEIYKVAERHGLPVSVVAGAFIRVPAHPLIERIAAGSGMDAADDWIAERVQPGDIVVTADVPLASRCVKAGAEVLAPNGKPFSEASIGMTLAVRNLMTDLRSSGEVTGGPRAFSPRDRSTFLAALDTTIRRIARRRASPPAQQQN</sequence>
<proteinExistence type="inferred from homology"/>
<comment type="similarity">
    <text evidence="1">Belongs to the UPF0178 family.</text>
</comment>
<gene>
    <name type="ordered locus">RPD_2254</name>
</gene>
<dbReference type="EMBL" id="CP000283">
    <property type="protein sequence ID" value="ABE39489.1"/>
    <property type="molecule type" value="Genomic_DNA"/>
</dbReference>
<dbReference type="STRING" id="316057.RPD_2254"/>
<dbReference type="KEGG" id="rpd:RPD_2254"/>
<dbReference type="eggNOG" id="COG1671">
    <property type="taxonomic scope" value="Bacteria"/>
</dbReference>
<dbReference type="HOGENOM" id="CLU_106619_2_1_5"/>
<dbReference type="BioCyc" id="RPAL316057:RPD_RS11315-MONOMER"/>
<dbReference type="Proteomes" id="UP000001818">
    <property type="component" value="Chromosome"/>
</dbReference>
<dbReference type="CDD" id="cd18720">
    <property type="entry name" value="PIN_YqxD-like"/>
    <property type="match status" value="1"/>
</dbReference>
<dbReference type="HAMAP" id="MF_00489">
    <property type="entry name" value="UPF0178"/>
    <property type="match status" value="1"/>
</dbReference>
<dbReference type="InterPro" id="IPR003791">
    <property type="entry name" value="UPF0178"/>
</dbReference>
<dbReference type="NCBIfam" id="NF001095">
    <property type="entry name" value="PRK00124.1"/>
    <property type="match status" value="1"/>
</dbReference>
<dbReference type="PANTHER" id="PTHR35146">
    <property type="entry name" value="UPF0178 PROTEIN YAII"/>
    <property type="match status" value="1"/>
</dbReference>
<dbReference type="PANTHER" id="PTHR35146:SF1">
    <property type="entry name" value="UPF0178 PROTEIN YAII"/>
    <property type="match status" value="1"/>
</dbReference>
<dbReference type="Pfam" id="PF02639">
    <property type="entry name" value="DUF188"/>
    <property type="match status" value="1"/>
</dbReference>